<gene>
    <name type="primary">WWP1</name>
</gene>
<organism>
    <name type="scientific">Homo sapiens</name>
    <name type="common">Human</name>
    <dbReference type="NCBI Taxonomy" id="9606"/>
    <lineage>
        <taxon>Eukaryota</taxon>
        <taxon>Metazoa</taxon>
        <taxon>Chordata</taxon>
        <taxon>Craniata</taxon>
        <taxon>Vertebrata</taxon>
        <taxon>Euteleostomi</taxon>
        <taxon>Mammalia</taxon>
        <taxon>Eutheria</taxon>
        <taxon>Euarchontoglires</taxon>
        <taxon>Primates</taxon>
        <taxon>Haplorrhini</taxon>
        <taxon>Catarrhini</taxon>
        <taxon>Hominidae</taxon>
        <taxon>Homo</taxon>
    </lineage>
</organism>
<feature type="chain" id="PRO_0000120336" description="NEDD4-like E3 ubiquitin-protein ligase WWP1">
    <location>
        <begin position="1"/>
        <end position="922"/>
    </location>
</feature>
<feature type="domain" description="C2" evidence="3">
    <location>
        <begin position="1"/>
        <end position="116"/>
    </location>
</feature>
<feature type="domain" description="WW 1" evidence="5">
    <location>
        <begin position="349"/>
        <end position="382"/>
    </location>
</feature>
<feature type="domain" description="WW 2" evidence="5">
    <location>
        <begin position="381"/>
        <end position="414"/>
    </location>
</feature>
<feature type="domain" description="WW 3" evidence="5">
    <location>
        <begin position="456"/>
        <end position="489"/>
    </location>
</feature>
<feature type="domain" description="WW 4" evidence="5">
    <location>
        <begin position="496"/>
        <end position="529"/>
    </location>
</feature>
<feature type="domain" description="HECT" evidence="4">
    <location>
        <begin position="588"/>
        <end position="922"/>
    </location>
</feature>
<feature type="region of interest" description="Disordered" evidence="6">
    <location>
        <begin position="210"/>
        <end position="388"/>
    </location>
</feature>
<feature type="region of interest" description="Required for interaction with and ubiquitination of AMOTL2. Required for interaction with YAP1" evidence="19">
    <location>
        <begin position="349"/>
        <end position="531"/>
    </location>
</feature>
<feature type="compositionally biased region" description="Polar residues" evidence="6">
    <location>
        <begin position="210"/>
        <end position="219"/>
    </location>
</feature>
<feature type="compositionally biased region" description="Polar residues" evidence="6">
    <location>
        <begin position="243"/>
        <end position="278"/>
    </location>
</feature>
<feature type="compositionally biased region" description="Polar residues" evidence="6">
    <location>
        <begin position="286"/>
        <end position="302"/>
    </location>
</feature>
<feature type="compositionally biased region" description="Polar residues" evidence="6">
    <location>
        <begin position="314"/>
        <end position="323"/>
    </location>
</feature>
<feature type="compositionally biased region" description="Polar residues" evidence="6">
    <location>
        <begin position="340"/>
        <end position="351"/>
    </location>
</feature>
<feature type="active site" description="Glycyl thioester intermediate" evidence="4">
    <location>
        <position position="890"/>
    </location>
</feature>
<feature type="site" description="Required for ubiquitin-thioester formation" evidence="1">
    <location>
        <position position="890"/>
    </location>
</feature>
<feature type="splice variant" id="VSP_007600" description="In isoform 6." evidence="22">
    <location>
        <begin position="23"/>
        <end position="240"/>
    </location>
</feature>
<feature type="splice variant" id="VSP_007602" description="In isoform 3." evidence="22">
    <original>LERVKEQLKLSLENKNGIAQTGELTVVLDGLVIEQENITNCSSSPTIEIQENGDALHENGEPSARTTARLAVEGTNGIDNHVPTSTLVQNSCCSYVVNGDNTPSSPSQVAARPKNTPAPKPLASEPADDTV</original>
    <variation>F</variation>
    <location>
        <begin position="112"/>
        <end position="242"/>
    </location>
</feature>
<feature type="splice variant" id="VSP_007601" description="In isoform 2." evidence="22">
    <original>LERVKEQLK</original>
    <variation>CWLLKARME</variation>
    <location>
        <begin position="112"/>
        <end position="120"/>
    </location>
</feature>
<feature type="splice variant" id="VSP_007603" description="In isoform 2." evidence="22">
    <location>
        <begin position="121"/>
        <end position="922"/>
    </location>
</feature>
<feature type="mutagenesis site" description="Reduces ubiquitin transfer." evidence="9">
    <original>E</original>
    <variation>A</variation>
    <location>
        <position position="614"/>
    </location>
</feature>
<feature type="mutagenesis site" description="Strongly reduces ubiquitin transfer." evidence="9">
    <original>H</original>
    <variation>A</variation>
    <location>
        <position position="621"/>
    </location>
</feature>
<feature type="mutagenesis site" description="Reduces ubiquitin transfer." evidence="9">
    <original>D</original>
    <variation>A</variation>
    <location>
        <position position="675"/>
    </location>
</feature>
<feature type="mutagenesis site" description="Reduces ubiquitin transfer. Strongly reduces ubiquitin transfer; when associated with A-845." evidence="9">
    <original>E</original>
    <variation>A</variation>
    <location>
        <position position="798"/>
    </location>
</feature>
<feature type="mutagenesis site" description="Strongly reduces ubiquitin transfer; when associated with P-806." evidence="9">
    <original>M</original>
    <variation>P</variation>
    <location>
        <position position="804"/>
    </location>
</feature>
<feature type="mutagenesis site" description="Strongly reduces ubiquitin transfer; when associated with P-804." evidence="9">
    <original>E</original>
    <variation>P</variation>
    <location>
        <position position="806"/>
    </location>
</feature>
<feature type="mutagenesis site" description="No effect." evidence="9">
    <original>R</original>
    <variation>A</variation>
    <location>
        <position position="845"/>
    </location>
</feature>
<feature type="mutagenesis site" description="Abolishes ubiquitin transfer; when associated with A-855." evidence="9">
    <original>Q</original>
    <variation>A</variation>
    <location>
        <position position="848"/>
    </location>
</feature>
<feature type="mutagenesis site" description="Abolishes ubiquitin transfer; when associated with A-848." evidence="9">
    <original>R</original>
    <variation>A</variation>
    <location>
        <position position="855"/>
    </location>
</feature>
<feature type="mutagenesis site" description="Abolishes monoubiquitination of AMOTL2." evidence="19">
    <original>C</original>
    <variation>A</variation>
    <location>
        <position position="890"/>
    </location>
</feature>
<feature type="strand" evidence="27">
    <location>
        <begin position="387"/>
        <end position="391"/>
    </location>
</feature>
<feature type="strand" evidence="27">
    <location>
        <begin position="397"/>
        <end position="401"/>
    </location>
</feature>
<feature type="turn" evidence="27">
    <location>
        <begin position="402"/>
        <end position="404"/>
    </location>
</feature>
<feature type="strand" evidence="27">
    <location>
        <begin position="407"/>
        <end position="410"/>
    </location>
</feature>
<feature type="helix" evidence="27">
    <location>
        <begin position="414"/>
        <end position="423"/>
    </location>
</feature>
<feature type="turn" evidence="28">
    <location>
        <begin position="427"/>
        <end position="429"/>
    </location>
</feature>
<feature type="turn" evidence="30">
    <location>
        <begin position="430"/>
        <end position="432"/>
    </location>
</feature>
<feature type="helix" evidence="27">
    <location>
        <begin position="434"/>
        <end position="443"/>
    </location>
</feature>
<feature type="helix" evidence="28">
    <location>
        <begin position="445"/>
        <end position="448"/>
    </location>
</feature>
<feature type="strand" evidence="28">
    <location>
        <begin position="452"/>
        <end position="455"/>
    </location>
</feature>
<feature type="strand" evidence="28">
    <location>
        <begin position="462"/>
        <end position="466"/>
    </location>
</feature>
<feature type="strand" evidence="28">
    <location>
        <begin position="472"/>
        <end position="476"/>
    </location>
</feature>
<feature type="turn" evidence="28">
    <location>
        <begin position="477"/>
        <end position="480"/>
    </location>
</feature>
<feature type="strand" evidence="28">
    <location>
        <begin position="481"/>
        <end position="485"/>
    </location>
</feature>
<feature type="helix" evidence="28">
    <location>
        <begin position="487"/>
        <end position="490"/>
    </location>
</feature>
<feature type="strand" evidence="27">
    <location>
        <begin position="502"/>
        <end position="506"/>
    </location>
</feature>
<feature type="turn" evidence="24">
    <location>
        <begin position="509"/>
        <end position="511"/>
    </location>
</feature>
<feature type="strand" evidence="27">
    <location>
        <begin position="512"/>
        <end position="516"/>
    </location>
</feature>
<feature type="turn" evidence="27">
    <location>
        <begin position="517"/>
        <end position="520"/>
    </location>
</feature>
<feature type="strand" evidence="27">
    <location>
        <begin position="521"/>
        <end position="525"/>
    </location>
</feature>
<feature type="turn" evidence="27">
    <location>
        <begin position="527"/>
        <end position="529"/>
    </location>
</feature>
<feature type="helix" evidence="25">
    <location>
        <begin position="547"/>
        <end position="559"/>
    </location>
</feature>
<feature type="strand" evidence="25">
    <location>
        <begin position="564"/>
        <end position="571"/>
    </location>
</feature>
<feature type="turn" evidence="23">
    <location>
        <begin position="573"/>
        <end position="575"/>
    </location>
</feature>
<feature type="helix" evidence="25">
    <location>
        <begin position="576"/>
        <end position="586"/>
    </location>
</feature>
<feature type="helix" evidence="25">
    <location>
        <begin position="589"/>
        <end position="593"/>
    </location>
</feature>
<feature type="strand" evidence="25">
    <location>
        <begin position="594"/>
        <end position="600"/>
    </location>
</feature>
<feature type="turn" evidence="23">
    <location>
        <begin position="601"/>
        <end position="603"/>
    </location>
</feature>
<feature type="helix" evidence="25">
    <location>
        <begin position="611"/>
        <end position="623"/>
    </location>
</feature>
<feature type="helix" evidence="25">
    <location>
        <begin position="626"/>
        <end position="628"/>
    </location>
</feature>
<feature type="strand" evidence="25">
    <location>
        <begin position="629"/>
        <end position="636"/>
    </location>
</feature>
<feature type="strand" evidence="25">
    <location>
        <begin position="641"/>
        <end position="643"/>
    </location>
</feature>
<feature type="helix" evidence="25">
    <location>
        <begin position="645"/>
        <end position="649"/>
    </location>
</feature>
<feature type="helix" evidence="25">
    <location>
        <begin position="653"/>
        <end position="669"/>
    </location>
</feature>
<feature type="helix" evidence="25">
    <location>
        <begin position="680"/>
        <end position="686"/>
    </location>
</feature>
<feature type="helix" evidence="25">
    <location>
        <begin position="693"/>
        <end position="699"/>
    </location>
</feature>
<feature type="helix" evidence="25">
    <location>
        <begin position="701"/>
        <end position="712"/>
    </location>
</feature>
<feature type="helix" evidence="25">
    <location>
        <begin position="715"/>
        <end position="718"/>
    </location>
</feature>
<feature type="strand" evidence="25">
    <location>
        <begin position="723"/>
        <end position="730"/>
    </location>
</feature>
<feature type="strand" evidence="25">
    <location>
        <begin position="733"/>
        <end position="740"/>
    </location>
</feature>
<feature type="helix" evidence="23">
    <location>
        <begin position="743"/>
        <end position="745"/>
    </location>
</feature>
<feature type="turn" evidence="25">
    <location>
        <begin position="749"/>
        <end position="751"/>
    </location>
</feature>
<feature type="helix" evidence="25">
    <location>
        <begin position="752"/>
        <end position="765"/>
    </location>
</feature>
<feature type="turn" evidence="25">
    <location>
        <begin position="766"/>
        <end position="769"/>
    </location>
</feature>
<feature type="helix" evidence="25">
    <location>
        <begin position="770"/>
        <end position="783"/>
    </location>
</feature>
<feature type="helix" evidence="25">
    <location>
        <begin position="786"/>
        <end position="791"/>
    </location>
</feature>
<feature type="helix" evidence="25">
    <location>
        <begin position="794"/>
        <end position="802"/>
    </location>
</feature>
<feature type="helix" evidence="25">
    <location>
        <begin position="809"/>
        <end position="814"/>
    </location>
</feature>
<feature type="strand" evidence="25">
    <location>
        <begin position="817"/>
        <end position="820"/>
    </location>
</feature>
<feature type="helix" evidence="25">
    <location>
        <begin position="826"/>
        <end position="837"/>
    </location>
</feature>
<feature type="helix" evidence="25">
    <location>
        <begin position="840"/>
        <end position="851"/>
    </location>
</feature>
<feature type="helix" evidence="25">
    <location>
        <begin position="860"/>
        <end position="863"/>
    </location>
</feature>
<feature type="strand" evidence="29">
    <location>
        <begin position="867"/>
        <end position="870"/>
    </location>
</feature>
<feature type="strand" evidence="25">
    <location>
        <begin position="874"/>
        <end position="876"/>
    </location>
</feature>
<feature type="strand" evidence="26">
    <location>
        <begin position="881"/>
        <end position="883"/>
    </location>
</feature>
<feature type="strand" evidence="25">
    <location>
        <begin position="886"/>
        <end position="888"/>
    </location>
</feature>
<feature type="helix" evidence="25">
    <location>
        <begin position="889"/>
        <end position="891"/>
    </location>
</feature>
<feature type="strand" evidence="25">
    <location>
        <begin position="893"/>
        <end position="895"/>
    </location>
</feature>
<feature type="helix" evidence="25">
    <location>
        <begin position="902"/>
        <end position="914"/>
    </location>
</feature>
<dbReference type="EC" id="2.3.2.26" evidence="19"/>
<dbReference type="EMBL" id="AL136739">
    <property type="protein sequence ID" value="CAB66673.1"/>
    <property type="molecule type" value="mRNA"/>
</dbReference>
<dbReference type="EMBL" id="AY043361">
    <property type="protein sequence ID" value="AAK94668.1"/>
    <property type="molecule type" value="mRNA"/>
</dbReference>
<dbReference type="EMBL" id="AY345857">
    <property type="protein sequence ID" value="AAQ22764.1"/>
    <property type="molecule type" value="mRNA"/>
</dbReference>
<dbReference type="EMBL" id="AC083845">
    <property type="status" value="NOT_ANNOTATED_CDS"/>
    <property type="molecule type" value="Genomic_DNA"/>
</dbReference>
<dbReference type="EMBL" id="AC103817">
    <property type="status" value="NOT_ANNOTATED_CDS"/>
    <property type="molecule type" value="Genomic_DNA"/>
</dbReference>
<dbReference type="EMBL" id="BC015380">
    <property type="protein sequence ID" value="AAH15380.2"/>
    <property type="molecule type" value="mRNA"/>
</dbReference>
<dbReference type="EMBL" id="BC036065">
    <property type="protein sequence ID" value="AAH36065.1"/>
    <property type="molecule type" value="mRNA"/>
</dbReference>
<dbReference type="EMBL" id="U96113">
    <property type="protein sequence ID" value="AAC51324.1"/>
    <property type="molecule type" value="mRNA"/>
</dbReference>
<dbReference type="CCDS" id="CCDS6242.1">
    <molecule id="Q9H0M0-1"/>
</dbReference>
<dbReference type="RefSeq" id="NP_008944.1">
    <molecule id="Q9H0M0-1"/>
    <property type="nucleotide sequence ID" value="NM_007013.4"/>
</dbReference>
<dbReference type="RefSeq" id="XP_005250817.1">
    <molecule id="Q9H0M0-1"/>
    <property type="nucleotide sequence ID" value="XM_005250760.5"/>
</dbReference>
<dbReference type="RefSeq" id="XP_054215606.1">
    <molecule id="Q9H0M0-1"/>
    <property type="nucleotide sequence ID" value="XM_054359631.1"/>
</dbReference>
<dbReference type="PDB" id="1ND7">
    <property type="method" value="X-ray"/>
    <property type="resolution" value="2.10 A"/>
    <property type="chains" value="A=546-917"/>
</dbReference>
<dbReference type="PDB" id="2OP7">
    <property type="method" value="NMR"/>
    <property type="chains" value="A=494-532"/>
</dbReference>
<dbReference type="PDB" id="5HPS">
    <property type="method" value="X-ray"/>
    <property type="resolution" value="2.05 A"/>
    <property type="chains" value="A=537-917"/>
</dbReference>
<dbReference type="PDB" id="5HPT">
    <property type="method" value="X-ray"/>
    <property type="resolution" value="2.84 A"/>
    <property type="chains" value="A/D/G=537-917"/>
</dbReference>
<dbReference type="PDB" id="6J1X">
    <property type="method" value="X-ray"/>
    <property type="resolution" value="2.30 A"/>
    <property type="chains" value="B=379-922"/>
</dbReference>
<dbReference type="PDB" id="6J1Y">
    <property type="method" value="X-ray"/>
    <property type="resolution" value="2.55 A"/>
    <property type="chains" value="A/B=410-922"/>
</dbReference>
<dbReference type="PDB" id="8EI4">
    <property type="method" value="X-ray"/>
    <property type="resolution" value="2.43 A"/>
    <property type="chains" value="A=546-917"/>
</dbReference>
<dbReference type="PDB" id="9EQK">
    <property type="method" value="X-ray"/>
    <property type="resolution" value="3.00 A"/>
    <property type="chains" value="A/B=379-922"/>
</dbReference>
<dbReference type="PDBsum" id="1ND7"/>
<dbReference type="PDBsum" id="2OP7"/>
<dbReference type="PDBsum" id="5HPS"/>
<dbReference type="PDBsum" id="5HPT"/>
<dbReference type="PDBsum" id="6J1X"/>
<dbReference type="PDBsum" id="6J1Y"/>
<dbReference type="PDBsum" id="8EI4"/>
<dbReference type="PDBsum" id="9EQK"/>
<dbReference type="SMR" id="Q9H0M0"/>
<dbReference type="BioGRID" id="116243">
    <property type="interactions" value="262"/>
</dbReference>
<dbReference type="CORUM" id="Q9H0M0"/>
<dbReference type="FunCoup" id="Q9H0M0">
    <property type="interactions" value="1565"/>
</dbReference>
<dbReference type="IntAct" id="Q9H0M0">
    <property type="interactions" value="95"/>
</dbReference>
<dbReference type="MINT" id="Q9H0M0"/>
<dbReference type="STRING" id="9606.ENSP00000427793"/>
<dbReference type="MoonDB" id="Q9H0M0">
    <property type="type" value="Predicted"/>
</dbReference>
<dbReference type="iPTMnet" id="Q9H0M0"/>
<dbReference type="PhosphoSitePlus" id="Q9H0M0"/>
<dbReference type="BioMuta" id="WWP1"/>
<dbReference type="DMDM" id="32171908"/>
<dbReference type="jPOST" id="Q9H0M0"/>
<dbReference type="MassIVE" id="Q9H0M0"/>
<dbReference type="PaxDb" id="9606-ENSP00000427793"/>
<dbReference type="PeptideAtlas" id="Q9H0M0"/>
<dbReference type="ProteomicsDB" id="80294">
    <molecule id="Q9H0M0-1"/>
</dbReference>
<dbReference type="ProteomicsDB" id="80295">
    <molecule id="Q9H0M0-2"/>
</dbReference>
<dbReference type="ProteomicsDB" id="80296">
    <molecule id="Q9H0M0-3"/>
</dbReference>
<dbReference type="ProteomicsDB" id="80297">
    <molecule id="Q9H0M0-6"/>
</dbReference>
<dbReference type="Pumba" id="Q9H0M0"/>
<dbReference type="ABCD" id="Q9H0M0">
    <property type="antibodies" value="3 sequenced antibodies"/>
</dbReference>
<dbReference type="Antibodypedia" id="25465">
    <property type="antibodies" value="160 antibodies from 28 providers"/>
</dbReference>
<dbReference type="DNASU" id="11059"/>
<dbReference type="Ensembl" id="ENST00000265428.4">
    <molecule id="Q9H0M0-1"/>
    <property type="protein sequence ID" value="ENSP00000265428.4"/>
    <property type="gene ID" value="ENSG00000123124.14"/>
</dbReference>
<dbReference type="Ensembl" id="ENST00000517970.6">
    <molecule id="Q9H0M0-1"/>
    <property type="protein sequence ID" value="ENSP00000427793.1"/>
    <property type="gene ID" value="ENSG00000123124.14"/>
</dbReference>
<dbReference type="GeneID" id="11059"/>
<dbReference type="KEGG" id="hsa:11059"/>
<dbReference type="MANE-Select" id="ENST00000517970.6">
    <property type="protein sequence ID" value="ENSP00000427793.1"/>
    <property type="RefSeq nucleotide sequence ID" value="NM_007013.4"/>
    <property type="RefSeq protein sequence ID" value="NP_008944.1"/>
</dbReference>
<dbReference type="UCSC" id="uc003ydt.4">
    <molecule id="Q9H0M0-1"/>
    <property type="organism name" value="human"/>
</dbReference>
<dbReference type="AGR" id="HGNC:17004"/>
<dbReference type="CTD" id="11059"/>
<dbReference type="DisGeNET" id="11059"/>
<dbReference type="GeneCards" id="WWP1"/>
<dbReference type="HGNC" id="HGNC:17004">
    <property type="gene designation" value="WWP1"/>
</dbReference>
<dbReference type="HPA" id="ENSG00000123124">
    <property type="expression patterns" value="Tissue enhanced (skeletal)"/>
</dbReference>
<dbReference type="MIM" id="602307">
    <property type="type" value="gene"/>
</dbReference>
<dbReference type="neXtProt" id="NX_Q9H0M0"/>
<dbReference type="OpenTargets" id="ENSG00000123124"/>
<dbReference type="PharmGKB" id="PA134960138"/>
<dbReference type="VEuPathDB" id="HostDB:ENSG00000123124"/>
<dbReference type="eggNOG" id="KOG0940">
    <property type="taxonomic scope" value="Eukaryota"/>
</dbReference>
<dbReference type="GeneTree" id="ENSGT00940000154635"/>
<dbReference type="HOGENOM" id="CLU_002173_0_1_1"/>
<dbReference type="InParanoid" id="Q9H0M0"/>
<dbReference type="OMA" id="NMAIEMT"/>
<dbReference type="OrthoDB" id="423283at2759"/>
<dbReference type="PAN-GO" id="Q9H0M0">
    <property type="GO annotations" value="4 GO annotations based on evolutionary models"/>
</dbReference>
<dbReference type="PhylomeDB" id="Q9H0M0"/>
<dbReference type="TreeFam" id="TF323658"/>
<dbReference type="BRENDA" id="2.3.2.26">
    <property type="organism ID" value="2681"/>
</dbReference>
<dbReference type="PathwayCommons" id="Q9H0M0"/>
<dbReference type="Reactome" id="R-HSA-1253288">
    <property type="pathway name" value="Downregulation of ERBB4 signaling"/>
</dbReference>
<dbReference type="Reactome" id="R-HSA-2672351">
    <property type="pathway name" value="Stimuli-sensing channels"/>
</dbReference>
<dbReference type="Reactome" id="R-HSA-8939902">
    <property type="pathway name" value="Regulation of RUNX2 expression and activity"/>
</dbReference>
<dbReference type="Reactome" id="R-HSA-983168">
    <property type="pathway name" value="Antigen processing: Ubiquitination &amp; Proteasome degradation"/>
</dbReference>
<dbReference type="SignaLink" id="Q9H0M0"/>
<dbReference type="SIGNOR" id="Q9H0M0"/>
<dbReference type="UniPathway" id="UPA00143"/>
<dbReference type="BioGRID-ORCS" id="11059">
    <property type="hits" value="15 hits in 1212 CRISPR screens"/>
</dbReference>
<dbReference type="ChiTaRS" id="WWP1">
    <property type="organism name" value="human"/>
</dbReference>
<dbReference type="EvolutionaryTrace" id="Q9H0M0"/>
<dbReference type="GeneWiki" id="WWP1"/>
<dbReference type="GenomeRNAi" id="11059"/>
<dbReference type="Pharos" id="Q9H0M0">
    <property type="development level" value="Tbio"/>
</dbReference>
<dbReference type="PRO" id="PR:Q9H0M0"/>
<dbReference type="Proteomes" id="UP000005640">
    <property type="component" value="Chromosome 8"/>
</dbReference>
<dbReference type="RNAct" id="Q9H0M0">
    <property type="molecule type" value="protein"/>
</dbReference>
<dbReference type="Bgee" id="ENSG00000123124">
    <property type="expression patterns" value="Expressed in skeletal muscle tissue of rectus abdominis and 219 other cell types or tissues"/>
</dbReference>
<dbReference type="ExpressionAtlas" id="Q9H0M0">
    <property type="expression patterns" value="baseline and differential"/>
</dbReference>
<dbReference type="GO" id="GO:0070161">
    <property type="term" value="C:anchoring junction"/>
    <property type="evidence" value="ECO:0007669"/>
    <property type="project" value="UniProtKB-SubCell"/>
</dbReference>
<dbReference type="GO" id="GO:0005737">
    <property type="term" value="C:cytoplasm"/>
    <property type="evidence" value="ECO:0000318"/>
    <property type="project" value="GO_Central"/>
</dbReference>
<dbReference type="GO" id="GO:0005829">
    <property type="term" value="C:cytosol"/>
    <property type="evidence" value="ECO:0000304"/>
    <property type="project" value="Reactome"/>
</dbReference>
<dbReference type="GO" id="GO:0070062">
    <property type="term" value="C:extracellular exosome"/>
    <property type="evidence" value="ECO:0007005"/>
    <property type="project" value="UniProtKB"/>
</dbReference>
<dbReference type="GO" id="GO:0005634">
    <property type="term" value="C:nucleus"/>
    <property type="evidence" value="ECO:0007669"/>
    <property type="project" value="UniProtKB-SubCell"/>
</dbReference>
<dbReference type="GO" id="GO:0005886">
    <property type="term" value="C:plasma membrane"/>
    <property type="evidence" value="ECO:0007669"/>
    <property type="project" value="UniProtKB-SubCell"/>
</dbReference>
<dbReference type="GO" id="GO:0000151">
    <property type="term" value="C:ubiquitin ligase complex"/>
    <property type="evidence" value="ECO:0000303"/>
    <property type="project" value="UniProtKB"/>
</dbReference>
<dbReference type="GO" id="GO:0061630">
    <property type="term" value="F:ubiquitin protein ligase activity"/>
    <property type="evidence" value="ECO:0000318"/>
    <property type="project" value="GO_Central"/>
</dbReference>
<dbReference type="GO" id="GO:0004842">
    <property type="term" value="F:ubiquitin-protein transferase activity"/>
    <property type="evidence" value="ECO:0000304"/>
    <property type="project" value="UniProtKB"/>
</dbReference>
<dbReference type="GO" id="GO:0007417">
    <property type="term" value="P:central nervous system development"/>
    <property type="evidence" value="ECO:0000303"/>
    <property type="project" value="UniProtKB"/>
</dbReference>
<dbReference type="GO" id="GO:0034220">
    <property type="term" value="P:monoatomic ion transmembrane transport"/>
    <property type="evidence" value="ECO:0000304"/>
    <property type="project" value="Reactome"/>
</dbReference>
<dbReference type="GO" id="GO:0045892">
    <property type="term" value="P:negative regulation of DNA-templated transcription"/>
    <property type="evidence" value="ECO:0000250"/>
    <property type="project" value="UniProtKB"/>
</dbReference>
<dbReference type="GO" id="GO:0043161">
    <property type="term" value="P:proteasome-mediated ubiquitin-dependent protein catabolic process"/>
    <property type="evidence" value="ECO:0000318"/>
    <property type="project" value="GO_Central"/>
</dbReference>
<dbReference type="GO" id="GO:0016567">
    <property type="term" value="P:protein ubiquitination"/>
    <property type="evidence" value="ECO:0000304"/>
    <property type="project" value="UniProtKB"/>
</dbReference>
<dbReference type="GO" id="GO:0007165">
    <property type="term" value="P:signal transduction"/>
    <property type="evidence" value="ECO:0000303"/>
    <property type="project" value="UniProtKB"/>
</dbReference>
<dbReference type="GO" id="GO:0046718">
    <property type="term" value="P:symbiont entry into host cell"/>
    <property type="evidence" value="ECO:0000304"/>
    <property type="project" value="UniProtKB"/>
</dbReference>
<dbReference type="CDD" id="cd04021">
    <property type="entry name" value="C2_E3_ubiquitin_ligase"/>
    <property type="match status" value="1"/>
</dbReference>
<dbReference type="CDD" id="cd00078">
    <property type="entry name" value="HECTc"/>
    <property type="match status" value="1"/>
</dbReference>
<dbReference type="CDD" id="cd00201">
    <property type="entry name" value="WW"/>
    <property type="match status" value="3"/>
</dbReference>
<dbReference type="FunFam" id="2.20.70.10:FF:000005">
    <property type="entry name" value="E3 ubiquitin-protein ligase"/>
    <property type="match status" value="1"/>
</dbReference>
<dbReference type="FunFam" id="2.20.70.10:FF:000009">
    <property type="entry name" value="E3 ubiquitin-protein ligase"/>
    <property type="match status" value="1"/>
</dbReference>
<dbReference type="FunFam" id="2.60.40.150:FF:000122">
    <property type="entry name" value="E3 ubiquitin-protein ligase"/>
    <property type="match status" value="1"/>
</dbReference>
<dbReference type="FunFam" id="3.30.2160.10:FF:000003">
    <property type="entry name" value="E3 ubiquitin-protein ligase"/>
    <property type="match status" value="1"/>
</dbReference>
<dbReference type="FunFam" id="3.90.1750.10:FF:000002">
    <property type="entry name" value="E3 ubiquitin-protein ligase"/>
    <property type="match status" value="1"/>
</dbReference>
<dbReference type="FunFam" id="3.90.1750.10:FF:000026">
    <property type="entry name" value="E3 ubiquitin-protein ligase HACE1"/>
    <property type="match status" value="1"/>
</dbReference>
<dbReference type="FunFam" id="3.30.2410.10:FF:000002">
    <property type="entry name" value="E3 ubiquitin-protein ligase HECW2"/>
    <property type="match status" value="1"/>
</dbReference>
<dbReference type="FunFam" id="2.20.70.10:FF:000093">
    <property type="entry name" value="NEDD4-like E3 ubiquitin-protein ligase WWP1"/>
    <property type="match status" value="1"/>
</dbReference>
<dbReference type="Gene3D" id="2.20.70.10">
    <property type="match status" value="3"/>
</dbReference>
<dbReference type="Gene3D" id="2.60.40.150">
    <property type="entry name" value="C2 domain"/>
    <property type="match status" value="1"/>
</dbReference>
<dbReference type="Gene3D" id="3.30.2160.10">
    <property type="entry name" value="Hect, E3 ligase catalytic domain"/>
    <property type="match status" value="1"/>
</dbReference>
<dbReference type="Gene3D" id="3.30.2410.10">
    <property type="entry name" value="Hect, E3 ligase catalytic domain"/>
    <property type="match status" value="1"/>
</dbReference>
<dbReference type="Gene3D" id="3.90.1750.10">
    <property type="entry name" value="Hect, E3 ligase catalytic domains"/>
    <property type="match status" value="1"/>
</dbReference>
<dbReference type="InterPro" id="IPR000008">
    <property type="entry name" value="C2_dom"/>
</dbReference>
<dbReference type="InterPro" id="IPR035892">
    <property type="entry name" value="C2_domain_sf"/>
</dbReference>
<dbReference type="InterPro" id="IPR024928">
    <property type="entry name" value="E3_ub_ligase_SMURF1"/>
</dbReference>
<dbReference type="InterPro" id="IPR050409">
    <property type="entry name" value="E3_ubiq-protein_ligase"/>
</dbReference>
<dbReference type="InterPro" id="IPR000569">
    <property type="entry name" value="HECT_dom"/>
</dbReference>
<dbReference type="InterPro" id="IPR035983">
    <property type="entry name" value="Hect_E3_ubiquitin_ligase"/>
</dbReference>
<dbReference type="InterPro" id="IPR001202">
    <property type="entry name" value="WW_dom"/>
</dbReference>
<dbReference type="InterPro" id="IPR036020">
    <property type="entry name" value="WW_dom_sf"/>
</dbReference>
<dbReference type="PANTHER" id="PTHR11254">
    <property type="entry name" value="HECT DOMAIN UBIQUITIN-PROTEIN LIGASE"/>
    <property type="match status" value="1"/>
</dbReference>
<dbReference type="PANTHER" id="PTHR11254:SF299">
    <property type="entry name" value="NEDD4-LIKE E3 UBIQUITIN-PROTEIN LIGASE WWP1"/>
    <property type="match status" value="1"/>
</dbReference>
<dbReference type="Pfam" id="PF00168">
    <property type="entry name" value="C2"/>
    <property type="match status" value="1"/>
</dbReference>
<dbReference type="Pfam" id="PF00632">
    <property type="entry name" value="HECT"/>
    <property type="match status" value="1"/>
</dbReference>
<dbReference type="Pfam" id="PF00397">
    <property type="entry name" value="WW"/>
    <property type="match status" value="4"/>
</dbReference>
<dbReference type="PIRSF" id="PIRSF001569">
    <property type="entry name" value="E3_ub_ligase_SMURF1"/>
    <property type="match status" value="1"/>
</dbReference>
<dbReference type="SMART" id="SM00239">
    <property type="entry name" value="C2"/>
    <property type="match status" value="1"/>
</dbReference>
<dbReference type="SMART" id="SM00119">
    <property type="entry name" value="HECTc"/>
    <property type="match status" value="1"/>
</dbReference>
<dbReference type="SMART" id="SM00456">
    <property type="entry name" value="WW"/>
    <property type="match status" value="4"/>
</dbReference>
<dbReference type="SUPFAM" id="SSF49562">
    <property type="entry name" value="C2 domain (Calcium/lipid-binding domain, CaLB)"/>
    <property type="match status" value="1"/>
</dbReference>
<dbReference type="SUPFAM" id="SSF56204">
    <property type="entry name" value="Hect, E3 ligase catalytic domain"/>
    <property type="match status" value="1"/>
</dbReference>
<dbReference type="SUPFAM" id="SSF51045">
    <property type="entry name" value="WW domain"/>
    <property type="match status" value="4"/>
</dbReference>
<dbReference type="PROSITE" id="PS50004">
    <property type="entry name" value="C2"/>
    <property type="match status" value="1"/>
</dbReference>
<dbReference type="PROSITE" id="PS50237">
    <property type="entry name" value="HECT"/>
    <property type="match status" value="1"/>
</dbReference>
<dbReference type="PROSITE" id="PS01159">
    <property type="entry name" value="WW_DOMAIN_1"/>
    <property type="match status" value="4"/>
</dbReference>
<dbReference type="PROSITE" id="PS50020">
    <property type="entry name" value="WW_DOMAIN_2"/>
    <property type="match status" value="4"/>
</dbReference>
<keyword id="KW-0002">3D-structure</keyword>
<keyword id="KW-0025">Alternative splicing</keyword>
<keyword id="KW-0965">Cell junction</keyword>
<keyword id="KW-1003">Cell membrane</keyword>
<keyword id="KW-0963">Cytoplasm</keyword>
<keyword id="KW-0945">Host-virus interaction</keyword>
<keyword id="KW-0472">Membrane</keyword>
<keyword id="KW-0539">Nucleus</keyword>
<keyword id="KW-1267">Proteomics identification</keyword>
<keyword id="KW-1185">Reference proteome</keyword>
<keyword id="KW-0677">Repeat</keyword>
<keyword id="KW-0808">Transferase</keyword>
<keyword id="KW-0832">Ubl conjugation</keyword>
<keyword id="KW-0833">Ubl conjugation pathway</keyword>
<sequence>MATASPRSDTSNNHSGRLQLQVTVSSAKLKRKKNWFGTAIYTEVVVDGEITKTAKSSSSSNPKWDEQLTVNVTPQTTLEFQVWSHRTLKADALLGKATIDLKQALLIHNRKLERVKEQLKLSLENKNGIAQTGELTVVLDGLVIEQENITNCSSSPTIEIQENGDALHENGEPSARTTARLAVEGTNGIDNHVPTSTLVQNSCCSYVVNGDNTPSSPSQVAARPKNTPAPKPLASEPADDTVNGESSSFAPTDNASVTGTPVVSEENALSPNCTSTTVEDPPVQEILTSSENNECIPSTSAELESEARSILEPDTSNSRSSSAFEAAKSRQPDGCMDPVRQQSGNANTETLPSGWEQRKDPHGRTYYVDHNTRTTTWERPQPLPPGWERRVDDRRRVYYVDHNTRTTTWQRPTMESVRNFEQWQSQRNQLQGAMQQFNQRYLYSASMLAAENDPYGPLPPGWEKRVDSTDRVYFVNHNTKTTQWEDPRTQGLQNEEPLPEGWEIRYTREGVRYFVDHNTRTTTFKDPRNGKSSVTKGGPQIAYERGFRWKLAHFRYLCQSNALPSHVKINVSRQTLFEDSFQQIMALKPYDLRRRLYVIFRGEEGLDYGGLAREWFFLLSHEVLNPMYCLFEYAGKNNYCLQINPASTINPDHLSYFCFIGRFIAMALFHGKFIDTGFSLPFYKRMLSKKLTIKDLESIDTEFYNSLIWIRDNNIEECGLEMYFSVDMEILGKVTSHDLKLGGSNILVTEENKDEYIGLMTEWRFSRGVQEQTKAFLDGFNEVVPLQWLQYFDEKELEVMLCGMQEVDLADWQRNTVYRHYTRNSKQIIWFWQFVKETDNEVRMRLLQFVTGTCRLPLGGFAELMGSNGPQKFCIEKVGKDTWLPRSHTCFNRLDLPPYKSYEQLKEKLLFAIEETEGFGQE</sequence>
<evidence type="ECO:0000250" key="1"/>
<evidence type="ECO:0000250" key="2">
    <source>
        <dbReference type="UniProtKB" id="Q8BZZ3"/>
    </source>
</evidence>
<evidence type="ECO:0000255" key="3">
    <source>
        <dbReference type="PROSITE-ProRule" id="PRU00041"/>
    </source>
</evidence>
<evidence type="ECO:0000255" key="4">
    <source>
        <dbReference type="PROSITE-ProRule" id="PRU00104"/>
    </source>
</evidence>
<evidence type="ECO:0000255" key="5">
    <source>
        <dbReference type="PROSITE-ProRule" id="PRU00224"/>
    </source>
</evidence>
<evidence type="ECO:0000256" key="6">
    <source>
        <dbReference type="SAM" id="MobiDB-lite"/>
    </source>
</evidence>
<evidence type="ECO:0000269" key="7">
    <source>
    </source>
</evidence>
<evidence type="ECO:0000269" key="8">
    <source>
    </source>
</evidence>
<evidence type="ECO:0000269" key="9">
    <source>
    </source>
</evidence>
<evidence type="ECO:0000269" key="10">
    <source>
    </source>
</evidence>
<evidence type="ECO:0000269" key="11">
    <source>
    </source>
</evidence>
<evidence type="ECO:0000269" key="12">
    <source>
    </source>
</evidence>
<evidence type="ECO:0000269" key="13">
    <source>
    </source>
</evidence>
<evidence type="ECO:0000269" key="14">
    <source>
    </source>
</evidence>
<evidence type="ECO:0000269" key="15">
    <source>
    </source>
</evidence>
<evidence type="ECO:0000269" key="16">
    <source>
    </source>
</evidence>
<evidence type="ECO:0000269" key="17">
    <source>
    </source>
</evidence>
<evidence type="ECO:0000269" key="18">
    <source>
    </source>
</evidence>
<evidence type="ECO:0000269" key="19">
    <source>
    </source>
</evidence>
<evidence type="ECO:0000269" key="20">
    <source>
    </source>
</evidence>
<evidence type="ECO:0000269" key="21">
    <source>
    </source>
</evidence>
<evidence type="ECO:0000303" key="22">
    <source>
    </source>
</evidence>
<evidence type="ECO:0007829" key="23">
    <source>
        <dbReference type="PDB" id="1ND7"/>
    </source>
</evidence>
<evidence type="ECO:0007829" key="24">
    <source>
        <dbReference type="PDB" id="2OP7"/>
    </source>
</evidence>
<evidence type="ECO:0007829" key="25">
    <source>
        <dbReference type="PDB" id="5HPS"/>
    </source>
</evidence>
<evidence type="ECO:0007829" key="26">
    <source>
        <dbReference type="PDB" id="5HPT"/>
    </source>
</evidence>
<evidence type="ECO:0007829" key="27">
    <source>
        <dbReference type="PDB" id="6J1X"/>
    </source>
</evidence>
<evidence type="ECO:0007829" key="28">
    <source>
        <dbReference type="PDB" id="6J1Y"/>
    </source>
</evidence>
<evidence type="ECO:0007829" key="29">
    <source>
        <dbReference type="PDB" id="8EI4"/>
    </source>
</evidence>
<evidence type="ECO:0007829" key="30">
    <source>
        <dbReference type="PDB" id="9EQK"/>
    </source>
</evidence>
<reference key="1">
    <citation type="journal article" date="2001" name="Genome Res.">
        <title>Towards a catalog of human genes and proteins: sequencing and analysis of 500 novel complete protein coding human cDNAs.</title>
        <authorList>
            <person name="Wiemann S."/>
            <person name="Weil B."/>
            <person name="Wellenreuther R."/>
            <person name="Gassenhuber J."/>
            <person name="Glassl S."/>
            <person name="Ansorge W."/>
            <person name="Boecher M."/>
            <person name="Bloecker H."/>
            <person name="Bauersachs S."/>
            <person name="Blum H."/>
            <person name="Lauber J."/>
            <person name="Duesterhoeft A."/>
            <person name="Beyer A."/>
            <person name="Koehrer K."/>
            <person name="Strack N."/>
            <person name="Mewes H.-W."/>
            <person name="Ottenwaelder B."/>
            <person name="Obermaier B."/>
            <person name="Tampe J."/>
            <person name="Heubner D."/>
            <person name="Wambutt R."/>
            <person name="Korn B."/>
            <person name="Klein M."/>
            <person name="Poustka A."/>
        </authorList>
    </citation>
    <scope>NUCLEOTIDE SEQUENCE [LARGE SCALE MRNA] (ISOFORM 1)</scope>
    <source>
        <tissue>Testis</tissue>
    </source>
</reference>
<reference key="2">
    <citation type="journal article" date="2002" name="Biochem. Biophys. Res. Commun.">
        <title>Alternative splicing determines the domain structure of WWP1, a Nedd4 family protein.</title>
        <authorList>
            <person name="Flasza M."/>
            <person name="Gorman P."/>
            <person name="Roylance R."/>
            <person name="Canfield A.E."/>
            <person name="Baron M."/>
        </authorList>
    </citation>
    <scope>NUCLEOTIDE SEQUENCE [MRNA] (ISOFORMS 1; 2; 3; 4; 5 AND 6)</scope>
    <scope>TISSUE SPECIFICITY</scope>
    <source>
        <tissue>Mammary cancer</tissue>
    </source>
</reference>
<reference key="3">
    <citation type="journal article" date="2004" name="EMBO J.">
        <title>The novel E3 ubiquitin ligase Tiul1 associates with TGIF to target Smad2 for degradation.</title>
        <authorList>
            <person name="Seo S.R."/>
            <person name="Lallemand F."/>
            <person name="Ferrand N."/>
            <person name="Pessah M."/>
            <person name="L'Hoste S."/>
            <person name="Camonis J."/>
            <person name="Atfi A."/>
        </authorList>
    </citation>
    <scope>NUCLEOTIDE SEQUENCE [MRNA]</scope>
    <scope>FUNCTION</scope>
    <scope>UBIQUITINATION OF SMAD2 AND TGFBR1</scope>
    <scope>INTERACTION WITH SMAD7 AND TGIF</scope>
</reference>
<reference key="4">
    <citation type="journal article" date="2006" name="Nature">
        <title>DNA sequence and analysis of human chromosome 8.</title>
        <authorList>
            <person name="Nusbaum C."/>
            <person name="Mikkelsen T.S."/>
            <person name="Zody M.C."/>
            <person name="Asakawa S."/>
            <person name="Taudien S."/>
            <person name="Garber M."/>
            <person name="Kodira C.D."/>
            <person name="Schueler M.G."/>
            <person name="Shimizu A."/>
            <person name="Whittaker C.A."/>
            <person name="Chang J.L."/>
            <person name="Cuomo C.A."/>
            <person name="Dewar K."/>
            <person name="FitzGerald M.G."/>
            <person name="Yang X."/>
            <person name="Allen N.R."/>
            <person name="Anderson S."/>
            <person name="Asakawa T."/>
            <person name="Blechschmidt K."/>
            <person name="Bloom T."/>
            <person name="Borowsky M.L."/>
            <person name="Butler J."/>
            <person name="Cook A."/>
            <person name="Corum B."/>
            <person name="DeArellano K."/>
            <person name="DeCaprio D."/>
            <person name="Dooley K.T."/>
            <person name="Dorris L. III"/>
            <person name="Engels R."/>
            <person name="Gloeckner G."/>
            <person name="Hafez N."/>
            <person name="Hagopian D.S."/>
            <person name="Hall J.L."/>
            <person name="Ishikawa S.K."/>
            <person name="Jaffe D.B."/>
            <person name="Kamat A."/>
            <person name="Kudoh J."/>
            <person name="Lehmann R."/>
            <person name="Lokitsang T."/>
            <person name="Macdonald P."/>
            <person name="Major J.E."/>
            <person name="Matthews C.D."/>
            <person name="Mauceli E."/>
            <person name="Menzel U."/>
            <person name="Mihalev A.H."/>
            <person name="Minoshima S."/>
            <person name="Murayama Y."/>
            <person name="Naylor J.W."/>
            <person name="Nicol R."/>
            <person name="Nguyen C."/>
            <person name="O'Leary S.B."/>
            <person name="O'Neill K."/>
            <person name="Parker S.C.J."/>
            <person name="Polley A."/>
            <person name="Raymond C.K."/>
            <person name="Reichwald K."/>
            <person name="Rodriguez J."/>
            <person name="Sasaki T."/>
            <person name="Schilhabel M."/>
            <person name="Siddiqui R."/>
            <person name="Smith C.L."/>
            <person name="Sneddon T.P."/>
            <person name="Talamas J.A."/>
            <person name="Tenzin P."/>
            <person name="Topham K."/>
            <person name="Venkataraman V."/>
            <person name="Wen G."/>
            <person name="Yamazaki S."/>
            <person name="Young S.K."/>
            <person name="Zeng Q."/>
            <person name="Zimmer A.R."/>
            <person name="Rosenthal A."/>
            <person name="Birren B.W."/>
            <person name="Platzer M."/>
            <person name="Shimizu N."/>
            <person name="Lander E.S."/>
        </authorList>
    </citation>
    <scope>NUCLEOTIDE SEQUENCE [LARGE SCALE GENOMIC DNA]</scope>
</reference>
<reference key="5">
    <citation type="journal article" date="2004" name="Genome Res.">
        <title>The status, quality, and expansion of the NIH full-length cDNA project: the Mammalian Gene Collection (MGC).</title>
        <authorList>
            <consortium name="The MGC Project Team"/>
        </authorList>
    </citation>
    <scope>NUCLEOTIDE SEQUENCE [LARGE SCALE MRNA] (ISOFORM 1)</scope>
    <source>
        <tissue>Lung</tissue>
        <tissue>Testis</tissue>
    </source>
</reference>
<reference key="6">
    <citation type="journal article" date="1997" name="J. Biol. Chem.">
        <title>Identification of novel human WW domain-containing proteins by cloning of ligand targets.</title>
        <authorList>
            <person name="Pirozzi G."/>
            <person name="McConnell S.J."/>
            <person name="Uveges A.J."/>
            <person name="Carter J.M."/>
            <person name="Sparks A.B."/>
            <person name="Kay B.K."/>
            <person name="Fowlkes D.M."/>
        </authorList>
    </citation>
    <scope>NUCLEOTIDE SEQUENCE [MRNA] OF 191-870</scope>
    <scope>INTERACTION WITH WBP1; WBP2; SCNN1A; SCNN1B AND SCNN1G</scope>
    <source>
        <tissue>Bone marrow</tissue>
        <tissue>Brain</tissue>
    </source>
</reference>
<reference key="7">
    <citation type="journal article" date="1998" name="Mol. Cell. Neurosci.">
        <title>Atrophin-1, the DRPLA gene product, interacts with two families of WW domain-containing proteins.</title>
        <authorList>
            <person name="Wood J.D."/>
            <person name="Yuan J."/>
            <person name="Margolis R.L."/>
            <person name="Colomer V."/>
            <person name="Duan K."/>
            <person name="Kushi J."/>
            <person name="Kaminsky Z."/>
            <person name="Kleiderlein J.J. Jr."/>
            <person name="Sharp A.H."/>
            <person name="Ross C.A."/>
        </authorList>
    </citation>
    <scope>INTERACTION WITH DRPLA</scope>
    <scope>TISSUE SPECIFICITY</scope>
</reference>
<reference key="8">
    <citation type="journal article" date="2002" name="Biochemistry">
        <title>Adenovirus protein involved in virus internalization recruits ubiquitin-protein ligases.</title>
        <authorList>
            <person name="Galinier R."/>
            <person name="Gout E."/>
            <person name="Lortat-Jacob H."/>
            <person name="Wood J."/>
            <person name="Chroboczek J."/>
        </authorList>
    </citation>
    <scope>INTERACTION WITH PIII</scope>
</reference>
<reference key="9">
    <citation type="journal article" date="2004" name="Oncogene">
        <title>Negative regulation of transforming growth factor-beta (TGF-beta) signaling by WW domain-containing protein 1 (WWP1).</title>
        <authorList>
            <person name="Komuro A."/>
            <person name="Imamura T."/>
            <person name="Saitoh M."/>
            <person name="Yoshida Y."/>
            <person name="Yamori T."/>
            <person name="Miyazono K."/>
            <person name="Miyazawa K."/>
        </authorList>
    </citation>
    <scope>FUNCTION IN UBIQUITINATION OF TGFBR1; SMAD6 AND SMAD7</scope>
    <scope>INTERACTION WITH SMAD1; SMAD2; SMAD3; SMAD5; SMAD6; SMAD7; TGFBR1; TGFBR2 AND SKIL</scope>
</reference>
<reference key="10">
    <citation type="journal article" date="2007" name="J. Virol.">
        <title>The role of WWP1-Gag interaction and Gag ubiquitination in assembly and release of human T-cell leukemia virus type 1.</title>
        <authorList>
            <person name="Heidecker G."/>
            <person name="Lloyd P.A."/>
            <person name="Soheilian F."/>
            <person name="Nagashima K."/>
            <person name="Derse D."/>
        </authorList>
    </citation>
    <scope>INTERACTION WITH HTLV-1 PROTEIN GAG (MICROBIAL INFECTION)</scope>
</reference>
<reference key="11">
    <citation type="journal article" date="2008" name="Oncogene">
        <title>The WW domain containing E3 ubiquitin protein ligase 1 upregulates ErbB2 and EGFR through RING finger protein 11.</title>
        <authorList>
            <person name="Chen C."/>
            <person name="Zhou Z."/>
            <person name="Liu R."/>
            <person name="Li Y."/>
            <person name="Azmi P.B."/>
            <person name="Seth A.K."/>
        </authorList>
    </citation>
    <scope>AUTOUBIQUITINATION</scope>
</reference>
<reference key="12">
    <citation type="journal article" date="2009" name="Biochem. J.">
        <title>Endogenous spartin (SPG20) is recruited to endosomes and lipid droplets and interacts with the ubiquitin E3 ligases AIP4 and AIP5.</title>
        <authorList>
            <person name="Edwards T.L."/>
            <person name="Clowes V.E."/>
            <person name="Tsang H.T."/>
            <person name="Connell J.W."/>
            <person name="Sanderson C.M."/>
            <person name="Luzio J.P."/>
            <person name="Reid E."/>
        </authorList>
    </citation>
    <scope>INTERACTION WITH SPART</scope>
</reference>
<reference key="13">
    <citation type="journal article" date="2009" name="EMBO Rep.">
        <title>Control of the activity of WW-HECT domain E3 ubiquitin ligases by NDFIP proteins.</title>
        <authorList>
            <person name="Mund T."/>
            <person name="Pelham H.R."/>
        </authorList>
    </citation>
    <scope>ACTIVATION BY NDFIP1 AND NDFIP2</scope>
    <scope>AUTOUBIQUITINATION</scope>
</reference>
<reference key="14">
    <citation type="journal article" date="2009" name="Oncogene">
        <title>WW domain containing E3 ubiquitin protein ligase 1 targets the full-length ErbB4 for ubiquitin-mediated degradation in breast cancer.</title>
        <authorList>
            <person name="Li Y."/>
            <person name="Zhou Z."/>
            <person name="Alimandi M."/>
            <person name="Chen C."/>
        </authorList>
    </citation>
    <scope>INTERACTION WITH ERBB4</scope>
</reference>
<reference key="15">
    <citation type="journal article" date="2011" name="J. Virol.">
        <title>Multiple interactions between the ESCRT machinery and arrestin-related proteins: implications for PPXY-dependent budding.</title>
        <authorList>
            <person name="Rauch S."/>
            <person name="Martin-Serrano J."/>
        </authorList>
    </citation>
    <scope>INTERACTION WITH ARRDC1; ARRDC2 AND ARRDC3</scope>
    <scope>DOMAIN</scope>
</reference>
<reference key="16">
    <citation type="journal article" date="2017" name="J. Virol.">
        <title>Ubiquitin Ligase WWP1 Interacts with Ebola Virus VP40 To Regulate Egress.</title>
        <authorList>
            <person name="Han Z."/>
            <person name="Sagum C.A."/>
            <person name="Takizawa F."/>
            <person name="Ruthel G."/>
            <person name="Berry C.T."/>
            <person name="Kong J."/>
            <person name="Sunyer J.O."/>
            <person name="Freedman B.D."/>
            <person name="Bedford M.T."/>
            <person name="Sidhu S.S."/>
            <person name="Sudol M."/>
            <person name="Harty R.N."/>
        </authorList>
    </citation>
    <scope>INTERACTION WITH EBOLA VIRUS PROTEIN VP40 (MICROBIAL INFECTION)</scope>
</reference>
<reference key="17">
    <citation type="journal article" date="2021" name="Life. Sci Alliance">
        <title>AMOTL2 mono-ubiquitination by WWP1 promotes contact inhibition by facilitating LATS activation.</title>
        <authorList>
            <person name="Hwang D."/>
            <person name="Kim M."/>
            <person name="Kim S."/>
            <person name="Kwon M.R."/>
            <person name="Kang Y.S."/>
            <person name="Kim D."/>
            <person name="Kang H.C."/>
            <person name="Lim D.S."/>
        </authorList>
    </citation>
    <scope>FUNCTION</scope>
    <scope>CATALYTIC ACTIVITY</scope>
    <scope>INTERACTION WITH PALS1 AND PATJ</scope>
    <scope>SUBCELLULAR LOCATION</scope>
    <scope>INDUCTION</scope>
    <scope>MUTAGENESIS OF CYS-890</scope>
</reference>
<reference key="18">
    <citation type="journal article" date="2003" name="Mol. Cell">
        <title>Conformational flexibility underlies ubiquitin ligation mediated by the WWP1 HECT domain E3 ligase.</title>
        <authorList>
            <person name="Verdecia M.A."/>
            <person name="Joazeiro C.A.P."/>
            <person name="Wells N.J."/>
            <person name="Ferrer J.-L."/>
            <person name="Bowman M.E."/>
            <person name="Hunter T."/>
            <person name="Noel J.P."/>
        </authorList>
    </citation>
    <scope>X-RAY CRYSTALLOGRAPHY (2.2 ANGSTROMS) OF 546-917</scope>
    <scope>MUTAGENESIS OF GLU-614; HIS-621; ASP-675; GLU-798; MET-804; GLU-806; ARG-845; GLN-848 AND ARG-855</scope>
    <scope>FUNCTION</scope>
</reference>
<name>WWP1_HUMAN</name>
<accession>Q9H0M0</accession>
<accession>O00307</accession>
<accession>Q5YLC1</accession>
<accession>Q96BP4</accession>
<comment type="function">
    <text evidence="9 10 11 19">E3 ubiquitin-protein ligase which accepts ubiquitin from an E2 ubiquitin-conjugating enzyme in the form of a thioester and then directly transfers the ubiquitin to targeted substrates. Ubiquitinates ERBB4 isoforms JM-A CYT-1 and JM-B CYT-1, KLF2, KLF5 and TP63 and promotes their proteasomal degradation. Ubiquitinates RNF11 without targeting it for degradation. Ubiquitinates and promotes degradation of TGFBR1; the ubiquitination is enhanced by SMAD7. Ubiquitinates SMAD6 and SMAD7. Ubiquitinates and promotes degradation of SMAD2 in response to TGF-beta signaling, which requires interaction with TGIF. Activates the Hippo signaling pathway in response to cell contact inhibition and recruitment to the Crumbs complex at the cell membrane (PubMed:34404733). Monoubiquitinates AMOTL2 which facilitates its interaction with and activation of LATS2 (PubMed:34404733). LATS2 then phosphorylates YAP1, excluding it from the nucleus and therefore ultimately represses YAP1-driven transcription of target genes (PubMed:34404733).</text>
</comment>
<comment type="catalytic activity">
    <reaction evidence="19">
        <text>S-ubiquitinyl-[E2 ubiquitin-conjugating enzyme]-L-cysteine + [acceptor protein]-L-lysine = [E2 ubiquitin-conjugating enzyme]-L-cysteine + N(6)-ubiquitinyl-[acceptor protein]-L-lysine.</text>
        <dbReference type="EC" id="2.3.2.26"/>
    </reaction>
</comment>
<comment type="activity regulation">
    <text>Activated by NDFIP1- and NDFIP2-binding.</text>
</comment>
<comment type="pathway">
    <text>Protein modification; protein ubiquitination.</text>
</comment>
<comment type="subunit">
    <text evidence="1 8 10 11 15 16 17 19 20 21">Interacts with the Crumbs complex components PALS1 and PATJ; interaction with the Crumbs complex is enhanced by WWP1's interaction with AMOTL2 and facilitates WWP1 localization to the plasma membrane (PubMed:34404733). Interaction with the Crumbs complex promotes WWP1 monoubiquitination of AMOTL2, which activates the Hippo signaling pathway (PubMed:34404733). Binds KLF2 and HIVEP3 (By similarity). Binds SCNN1A, SCNN1B, SCNN1G, WBP1, WBP2, DRPLA and adenovirus type 2 PIII. Interacts with RNF11 (By similarity). Interacts with SPART. Interacts with ERBB4 isoforms JM-B CYT-1 and JM-A CYT-1. Interacts with SMAD1, SMAD2, SMAD3, SMAD5, SMAD6, SMAD7, TGFBR1 and TGFBR2. Associates with the TGFBR1:TGFBR2 receptor complex in presence of SMAD7. Interacts with SKIL isoform 1. Interacts with TP63 isoform 1 and isoform 2. Interacts with STAMBP and RNF11. Interacts with NDFIP1 and NDFIP2 (Probable); this interaction activates the E3 ubiquitin-protein ligase. Interacts with TGIF. Interacts (via WW domains) with ARRDC1, ARRDC2 and ARRDC3 (PubMed:21191027).</text>
</comment>
<comment type="subunit">
    <text evidence="12">(Microbial infection) Interacts with HTLV-1 protein Gag.</text>
</comment>
<comment type="subunit">
    <text evidence="18">(Microbial infection) Interacts with ebola virus protein VP40.</text>
</comment>
<comment type="interaction">
    <interactant intactId="EBI-742157">
        <id>Q9H0M0</id>
    </interactant>
    <interactant intactId="EBI-2339564">
        <id>Q8N5I2</id>
        <label>ARRDC1</label>
    </interactant>
    <organismsDiffer>false</organismsDiffer>
    <experiments>5</experiments>
</comment>
<comment type="interaction">
    <interactant intactId="EBI-742157">
        <id>Q9H0M0</id>
    </interactant>
    <interactant intactId="EBI-2875665">
        <id>Q96B67</id>
        <label>ARRDC3</label>
    </interactant>
    <organismsDiffer>false</organismsDiffer>
    <experiments>5</experiments>
</comment>
<comment type="interaction">
    <interactant intactId="EBI-742157">
        <id>Q9H0M0</id>
    </interactant>
    <interactant intactId="EBI-946046">
        <id>P54252</id>
        <label>ATXN3</label>
    </interactant>
    <organismsDiffer>false</organismsDiffer>
    <experiments>3</experiments>
</comment>
<comment type="interaction">
    <interactant intactId="EBI-742157">
        <id>Q9H0M0</id>
    </interactant>
    <interactant intactId="EBI-358410">
        <id>Q16630</id>
        <label>CPSF6</label>
    </interactant>
    <organismsDiffer>false</organismsDiffer>
    <experiments>6</experiments>
</comment>
<comment type="interaction">
    <interactant intactId="EBI-742157">
        <id>Q9H0M0</id>
    </interactant>
    <interactant intactId="EBI-8636612">
        <id>Q15884</id>
        <label>ENTREP1</label>
    </interactant>
    <organismsDiffer>false</organismsDiffer>
    <experiments>3</experiments>
</comment>
<comment type="interaction">
    <interactant intactId="EBI-742157">
        <id>Q9H0M0</id>
    </interactant>
    <interactant intactId="EBI-744419">
        <id>Q96D16</id>
        <label>FBXL18</label>
    </interactant>
    <organismsDiffer>false</organismsDiffer>
    <experiments>3</experiments>
</comment>
<comment type="interaction">
    <interactant intactId="EBI-742157">
        <id>Q9H0M0</id>
    </interactant>
    <interactant intactId="EBI-347161">
        <id>P84022</id>
        <label>SMAD3</label>
    </interactant>
    <organismsDiffer>false</organismsDiffer>
    <experiments>9</experiments>
</comment>
<comment type="interaction">
    <interactant intactId="EBI-742157">
        <id>Q9H0M0</id>
    </interactant>
    <interactant intactId="EBI-3650647">
        <id>Q9BUZ4</id>
        <label>TRAF4</label>
    </interactant>
    <organismsDiffer>false</organismsDiffer>
    <experiments>3</experiments>
</comment>
<comment type="interaction">
    <interactant intactId="EBI-742157">
        <id>Q9H0M0</id>
    </interactant>
    <interactant intactId="EBI-747182">
        <id>Q8WU02</id>
    </interactant>
    <organismsDiffer>false</organismsDiffer>
    <experiments>3</experiments>
</comment>
<comment type="subcellular location">
    <subcellularLocation>
        <location evidence="19">Cytoplasm</location>
    </subcellularLocation>
    <subcellularLocation>
        <location evidence="19">Cell membrane</location>
        <topology evidence="2">Peripheral membrane protein</topology>
    </subcellularLocation>
    <subcellularLocation>
        <location evidence="2">Nucleus</location>
    </subcellularLocation>
    <subcellularLocation>
        <location evidence="19">Cell junction</location>
    </subcellularLocation>
    <text evidence="19">Translocates to the plasma membrane in response to increased cell-cell contact inhibition and subsequent interaction with the Crumbs complex.</text>
</comment>
<comment type="alternative products">
    <event type="alternative splicing"/>
    <isoform>
        <id>Q9H0M0-1</id>
        <name>1</name>
        <name>A</name>
        <sequence type="displayed"/>
    </isoform>
    <isoform>
        <id>Q9H0M0-2</id>
        <name>2</name>
        <name>B</name>
        <sequence type="described" ref="VSP_007601 VSP_007603"/>
    </isoform>
    <isoform>
        <id>Q9H0M0-3</id>
        <name>3</name>
        <name>C</name>
        <sequence type="described" ref="VSP_007602"/>
    </isoform>
    <isoform>
        <id>Q9H0M0-4</id>
        <name>4</name>
        <name>D</name>
        <sequence type="not described"/>
    </isoform>
    <isoform>
        <id>Q9H0M0-5</id>
        <name>5</name>
        <name>E</name>
        <sequence type="not described"/>
    </isoform>
    <isoform>
        <id>Q9H0M0-6</id>
        <name>6</name>
        <name>F</name>
        <sequence type="described" ref="VSP_007600"/>
    </isoform>
    <text>Additional isoforms seem to exist.</text>
</comment>
<comment type="tissue specificity">
    <text evidence="7 21">Detected in heart, placenta, pancreas, kidney, liver, skeletal muscle, bone marrow, fetal brain, and at much lower levels in adult brain and lung. Isoform 1 and isoform 5 predominate in all tissues tested, except in testis and bone marrow, where isoform 5 is expressed at much higher levels than isoform 1.</text>
</comment>
<comment type="induction">
    <text evidence="19">Induced at protein level in response to cell-cell contact inhibition, as a result of increased protein stability.</text>
</comment>
<comment type="domain">
    <text evidence="17">The WW domains mediate interaction with PPxY motif-containing proteins.</text>
</comment>
<comment type="PTM">
    <text evidence="11 13 14">Auto-ubiquitinated and ubiquitinated by RNF11.</text>
</comment>
<comment type="online information" name="Atlas of Genetics and Cytogenetics in Oncology and Haematology">
    <link uri="https://atlasgeneticsoncology.org/gene/42993/WWP1"/>
</comment>
<proteinExistence type="evidence at protein level"/>
<protein>
    <recommendedName>
        <fullName>NEDD4-like E3 ubiquitin-protein ligase WWP1</fullName>
        <ecNumber evidence="19">2.3.2.26</ecNumber>
    </recommendedName>
    <alternativeName>
        <fullName>Atrophin-1-interacting protein 5</fullName>
        <shortName>AIP5</shortName>
    </alternativeName>
    <alternativeName>
        <fullName>HECT-type E3 ubiquitin transferase WWP1</fullName>
    </alternativeName>
    <alternativeName>
        <fullName>TGIF-interacting ubiquitin ligase 1</fullName>
        <shortName>Tiul1</shortName>
    </alternativeName>
    <alternativeName>
        <fullName>WW domain-containing protein 1</fullName>
    </alternativeName>
</protein>